<organism>
    <name type="scientific">Vibrio cholerae serotype O1 (strain ATCC 39315 / El Tor Inaba N16961)</name>
    <dbReference type="NCBI Taxonomy" id="243277"/>
    <lineage>
        <taxon>Bacteria</taxon>
        <taxon>Pseudomonadati</taxon>
        <taxon>Pseudomonadota</taxon>
        <taxon>Gammaproteobacteria</taxon>
        <taxon>Vibrionales</taxon>
        <taxon>Vibrionaceae</taxon>
        <taxon>Vibrio</taxon>
    </lineage>
</organism>
<reference key="1">
    <citation type="journal article" date="2000" name="Nature">
        <title>DNA sequence of both chromosomes of the cholera pathogen Vibrio cholerae.</title>
        <authorList>
            <person name="Heidelberg J.F."/>
            <person name="Eisen J.A."/>
            <person name="Nelson W.C."/>
            <person name="Clayton R.A."/>
            <person name="Gwinn M.L."/>
            <person name="Dodson R.J."/>
            <person name="Haft D.H."/>
            <person name="Hickey E.K."/>
            <person name="Peterson J.D."/>
            <person name="Umayam L.A."/>
            <person name="Gill S.R."/>
            <person name="Nelson K.E."/>
            <person name="Read T.D."/>
            <person name="Tettelin H."/>
            <person name="Richardson D.L."/>
            <person name="Ermolaeva M.D."/>
            <person name="Vamathevan J.J."/>
            <person name="Bass S."/>
            <person name="Qin H."/>
            <person name="Dragoi I."/>
            <person name="Sellers P."/>
            <person name="McDonald L.A."/>
            <person name="Utterback T.R."/>
            <person name="Fleischmann R.D."/>
            <person name="Nierman W.C."/>
            <person name="White O."/>
            <person name="Salzberg S.L."/>
            <person name="Smith H.O."/>
            <person name="Colwell R.R."/>
            <person name="Mekalanos J.J."/>
            <person name="Venter J.C."/>
            <person name="Fraser C.M."/>
        </authorList>
    </citation>
    <scope>NUCLEOTIDE SEQUENCE [LARGE SCALE GENOMIC DNA]</scope>
    <source>
        <strain>ATCC 39315 / El Tor Inaba N16961</strain>
    </source>
</reference>
<keyword id="KW-0963">Cytoplasm</keyword>
<keyword id="KW-0342">GTP-binding</keyword>
<keyword id="KW-0378">Hydrolase</keyword>
<keyword id="KW-0460">Magnesium</keyword>
<keyword id="KW-0479">Metal-binding</keyword>
<keyword id="KW-0547">Nucleotide-binding</keyword>
<keyword id="KW-0630">Potassium</keyword>
<keyword id="KW-1185">Reference proteome</keyword>
<keyword id="KW-0819">tRNA processing</keyword>
<gene>
    <name evidence="1" type="primary">mnmE</name>
    <name evidence="1" type="synonym">trmE</name>
    <name type="ordered locus">VC_0003</name>
</gene>
<comment type="function">
    <text evidence="1">Exhibits a very high intrinsic GTPase hydrolysis rate. Involved in the addition of a carboxymethylaminomethyl (cmnm) group at the wobble position (U34) of certain tRNAs, forming tRNA-cmnm(5)s(2)U34.</text>
</comment>
<comment type="cofactor">
    <cofactor evidence="1">
        <name>K(+)</name>
        <dbReference type="ChEBI" id="CHEBI:29103"/>
    </cofactor>
    <text evidence="1">Binds 1 potassium ion per subunit.</text>
</comment>
<comment type="subunit">
    <text evidence="1">Homodimer. Heterotetramer of two MnmE and two MnmG subunits.</text>
</comment>
<comment type="subcellular location">
    <subcellularLocation>
        <location evidence="1">Cytoplasm</location>
    </subcellularLocation>
</comment>
<comment type="similarity">
    <text evidence="1">Belongs to the TRAFAC class TrmE-Era-EngA-EngB-Septin-like GTPase superfamily. TrmE GTPase family.</text>
</comment>
<comment type="sequence caution" evidence="2">
    <conflict type="erroneous initiation">
        <sequence resource="EMBL-CDS" id="AAF93181"/>
    </conflict>
</comment>
<dbReference type="EC" id="3.6.-.-" evidence="1"/>
<dbReference type="EMBL" id="AE003852">
    <property type="protein sequence ID" value="AAF93181.1"/>
    <property type="status" value="ALT_INIT"/>
    <property type="molecule type" value="Genomic_DNA"/>
</dbReference>
<dbReference type="PIR" id="D82375">
    <property type="entry name" value="D82375"/>
</dbReference>
<dbReference type="RefSeq" id="NP_062587.1">
    <property type="nucleotide sequence ID" value="NC_002505.1"/>
</dbReference>
<dbReference type="RefSeq" id="WP_000205962.1">
    <property type="nucleotide sequence ID" value="NZ_LT906614.1"/>
</dbReference>
<dbReference type="SMR" id="Q9KVY5"/>
<dbReference type="STRING" id="243277.VC_0003"/>
<dbReference type="DNASU" id="2614455"/>
<dbReference type="EnsemblBacteria" id="AAF93181">
    <property type="protein sequence ID" value="AAF93181"/>
    <property type="gene ID" value="VC_0003"/>
</dbReference>
<dbReference type="GeneID" id="69721161"/>
<dbReference type="KEGG" id="vch:VC_0003"/>
<dbReference type="PATRIC" id="fig|243277.26.peg.2"/>
<dbReference type="eggNOG" id="COG0486">
    <property type="taxonomic scope" value="Bacteria"/>
</dbReference>
<dbReference type="HOGENOM" id="CLU_019624_4_1_6"/>
<dbReference type="Proteomes" id="UP000000584">
    <property type="component" value="Chromosome 1"/>
</dbReference>
<dbReference type="GO" id="GO:0005737">
    <property type="term" value="C:cytoplasm"/>
    <property type="evidence" value="ECO:0000318"/>
    <property type="project" value="GO_Central"/>
</dbReference>
<dbReference type="GO" id="GO:0005829">
    <property type="term" value="C:cytosol"/>
    <property type="evidence" value="ECO:0000318"/>
    <property type="project" value="GO_Central"/>
</dbReference>
<dbReference type="GO" id="GO:0005525">
    <property type="term" value="F:GTP binding"/>
    <property type="evidence" value="ECO:0007669"/>
    <property type="project" value="UniProtKB-UniRule"/>
</dbReference>
<dbReference type="GO" id="GO:0003924">
    <property type="term" value="F:GTPase activity"/>
    <property type="evidence" value="ECO:0007669"/>
    <property type="project" value="UniProtKB-UniRule"/>
</dbReference>
<dbReference type="GO" id="GO:0046872">
    <property type="term" value="F:metal ion binding"/>
    <property type="evidence" value="ECO:0007669"/>
    <property type="project" value="UniProtKB-KW"/>
</dbReference>
<dbReference type="GO" id="GO:0030488">
    <property type="term" value="P:tRNA methylation"/>
    <property type="evidence" value="ECO:0000318"/>
    <property type="project" value="GO_Central"/>
</dbReference>
<dbReference type="GO" id="GO:0002098">
    <property type="term" value="P:tRNA wobble uridine modification"/>
    <property type="evidence" value="ECO:0000318"/>
    <property type="project" value="GO_Central"/>
</dbReference>
<dbReference type="CDD" id="cd04164">
    <property type="entry name" value="trmE"/>
    <property type="match status" value="1"/>
</dbReference>
<dbReference type="CDD" id="cd14858">
    <property type="entry name" value="TrmE_N"/>
    <property type="match status" value="1"/>
</dbReference>
<dbReference type="FunFam" id="3.30.1360.120:FF:000001">
    <property type="entry name" value="tRNA modification GTPase MnmE"/>
    <property type="match status" value="1"/>
</dbReference>
<dbReference type="FunFam" id="3.40.50.300:FF:000249">
    <property type="entry name" value="tRNA modification GTPase MnmE"/>
    <property type="match status" value="1"/>
</dbReference>
<dbReference type="Gene3D" id="3.40.50.300">
    <property type="entry name" value="P-loop containing nucleotide triphosphate hydrolases"/>
    <property type="match status" value="1"/>
</dbReference>
<dbReference type="Gene3D" id="3.30.1360.120">
    <property type="entry name" value="Probable tRNA modification gtpase trme, domain 1"/>
    <property type="match status" value="1"/>
</dbReference>
<dbReference type="Gene3D" id="1.20.120.430">
    <property type="entry name" value="tRNA modification GTPase MnmE domain 2"/>
    <property type="match status" value="1"/>
</dbReference>
<dbReference type="HAMAP" id="MF_00379">
    <property type="entry name" value="GTPase_MnmE"/>
    <property type="match status" value="1"/>
</dbReference>
<dbReference type="InterPro" id="IPR031168">
    <property type="entry name" value="G_TrmE"/>
</dbReference>
<dbReference type="InterPro" id="IPR006073">
    <property type="entry name" value="GTP-bd"/>
</dbReference>
<dbReference type="InterPro" id="IPR018948">
    <property type="entry name" value="GTP-bd_TrmE_N"/>
</dbReference>
<dbReference type="InterPro" id="IPR004520">
    <property type="entry name" value="GTPase_MnmE"/>
</dbReference>
<dbReference type="InterPro" id="IPR027368">
    <property type="entry name" value="MnmE_dom2"/>
</dbReference>
<dbReference type="InterPro" id="IPR025867">
    <property type="entry name" value="MnmE_helical"/>
</dbReference>
<dbReference type="InterPro" id="IPR027417">
    <property type="entry name" value="P-loop_NTPase"/>
</dbReference>
<dbReference type="InterPro" id="IPR005225">
    <property type="entry name" value="Small_GTP-bd"/>
</dbReference>
<dbReference type="InterPro" id="IPR027266">
    <property type="entry name" value="TrmE/GcvT_dom1"/>
</dbReference>
<dbReference type="NCBIfam" id="TIGR00450">
    <property type="entry name" value="mnmE_trmE_thdF"/>
    <property type="match status" value="1"/>
</dbReference>
<dbReference type="NCBIfam" id="NF003661">
    <property type="entry name" value="PRK05291.1-3"/>
    <property type="match status" value="1"/>
</dbReference>
<dbReference type="NCBIfam" id="TIGR00231">
    <property type="entry name" value="small_GTP"/>
    <property type="match status" value="1"/>
</dbReference>
<dbReference type="PANTHER" id="PTHR42714">
    <property type="entry name" value="TRNA MODIFICATION GTPASE GTPBP3"/>
    <property type="match status" value="1"/>
</dbReference>
<dbReference type="PANTHER" id="PTHR42714:SF2">
    <property type="entry name" value="TRNA MODIFICATION GTPASE GTPBP3, MITOCHONDRIAL"/>
    <property type="match status" value="1"/>
</dbReference>
<dbReference type="Pfam" id="PF01926">
    <property type="entry name" value="MMR_HSR1"/>
    <property type="match status" value="1"/>
</dbReference>
<dbReference type="Pfam" id="PF12631">
    <property type="entry name" value="MnmE_helical"/>
    <property type="match status" value="1"/>
</dbReference>
<dbReference type="Pfam" id="PF10396">
    <property type="entry name" value="TrmE_N"/>
    <property type="match status" value="1"/>
</dbReference>
<dbReference type="SUPFAM" id="SSF52540">
    <property type="entry name" value="P-loop containing nucleoside triphosphate hydrolases"/>
    <property type="match status" value="1"/>
</dbReference>
<dbReference type="SUPFAM" id="SSF116878">
    <property type="entry name" value="TrmE connector domain"/>
    <property type="match status" value="1"/>
</dbReference>
<dbReference type="PROSITE" id="PS51709">
    <property type="entry name" value="G_TRME"/>
    <property type="match status" value="1"/>
</dbReference>
<protein>
    <recommendedName>
        <fullName evidence="1">tRNA modification GTPase MnmE</fullName>
        <ecNumber evidence="1">3.6.-.-</ecNumber>
    </recommendedName>
</protein>
<name>MNME_VIBCH</name>
<sequence length="453" mass="49462">MTTDTIVAQATAPGRGGVGIIRVSGPLAAHVAQTVTGRTLRPRYAEYLPFTDEDGQQLDQGIALFFPNPHSFTGEDVLELQGHGGPVVMDMLIRRILQIKGVRPARPGEFSERAFLNDKMDLTQAEAIADLIDASSEQAAKSALQSLQGEFSKRIHTLVESLIHLRIYVEAAIDFPEEEIDFLADGKVSADLQTIIDNLAAVRREANQGAIMREGMKVVIAGRPNAGKSSLLNALSGKESAIVTDIAGTTRDVLREHIHIDGMPLHIIDTAGLRDASDAVEKIGIERAWEEIRQADRVLFMVDGTTTEATDPQDIWPDFVDKLPENIGITVIRNKADQTGEPLGICHVNQPTLIRLSAKTGQGVDALRQHLKECMGFSGNQEGGFMARRRHLDALERAAEHLAIGQQQLEGYMAGEILAEELRIAQQHLNEITGEFSSDDLLGRIFSSFCIGK</sequence>
<feature type="chain" id="PRO_0000188943" description="tRNA modification GTPase MnmE">
    <location>
        <begin position="1"/>
        <end position="453"/>
    </location>
</feature>
<feature type="domain" description="TrmE-type G">
    <location>
        <begin position="215"/>
        <end position="376"/>
    </location>
</feature>
<feature type="binding site" evidence="1">
    <location>
        <position position="22"/>
    </location>
    <ligand>
        <name>(6S)-5-formyl-5,6,7,8-tetrahydrofolate</name>
        <dbReference type="ChEBI" id="CHEBI:57457"/>
    </ligand>
</feature>
<feature type="binding site" evidence="1">
    <location>
        <position position="79"/>
    </location>
    <ligand>
        <name>(6S)-5-formyl-5,6,7,8-tetrahydrofolate</name>
        <dbReference type="ChEBI" id="CHEBI:57457"/>
    </ligand>
</feature>
<feature type="binding site" evidence="1">
    <location>
        <position position="119"/>
    </location>
    <ligand>
        <name>(6S)-5-formyl-5,6,7,8-tetrahydrofolate</name>
        <dbReference type="ChEBI" id="CHEBI:57457"/>
    </ligand>
</feature>
<feature type="binding site" evidence="1">
    <location>
        <begin position="225"/>
        <end position="230"/>
    </location>
    <ligand>
        <name>GTP</name>
        <dbReference type="ChEBI" id="CHEBI:37565"/>
    </ligand>
</feature>
<feature type="binding site" evidence="1">
    <location>
        <position position="225"/>
    </location>
    <ligand>
        <name>K(+)</name>
        <dbReference type="ChEBI" id="CHEBI:29103"/>
    </ligand>
</feature>
<feature type="binding site" evidence="1">
    <location>
        <position position="229"/>
    </location>
    <ligand>
        <name>Mg(2+)</name>
        <dbReference type="ChEBI" id="CHEBI:18420"/>
    </ligand>
</feature>
<feature type="binding site" evidence="1">
    <location>
        <begin position="244"/>
        <end position="250"/>
    </location>
    <ligand>
        <name>GTP</name>
        <dbReference type="ChEBI" id="CHEBI:37565"/>
    </ligand>
</feature>
<feature type="binding site" evidence="1">
    <location>
        <position position="244"/>
    </location>
    <ligand>
        <name>K(+)</name>
        <dbReference type="ChEBI" id="CHEBI:29103"/>
    </ligand>
</feature>
<feature type="binding site" evidence="1">
    <location>
        <position position="246"/>
    </location>
    <ligand>
        <name>K(+)</name>
        <dbReference type="ChEBI" id="CHEBI:29103"/>
    </ligand>
</feature>
<feature type="binding site" evidence="1">
    <location>
        <position position="249"/>
    </location>
    <ligand>
        <name>K(+)</name>
        <dbReference type="ChEBI" id="CHEBI:29103"/>
    </ligand>
</feature>
<feature type="binding site" evidence="1">
    <location>
        <position position="250"/>
    </location>
    <ligand>
        <name>Mg(2+)</name>
        <dbReference type="ChEBI" id="CHEBI:18420"/>
    </ligand>
</feature>
<feature type="binding site" evidence="1">
    <location>
        <begin position="269"/>
        <end position="272"/>
    </location>
    <ligand>
        <name>GTP</name>
        <dbReference type="ChEBI" id="CHEBI:37565"/>
    </ligand>
</feature>
<feature type="binding site" evidence="1">
    <location>
        <begin position="334"/>
        <end position="337"/>
    </location>
    <ligand>
        <name>GTP</name>
        <dbReference type="ChEBI" id="CHEBI:37565"/>
    </ligand>
</feature>
<feature type="binding site" evidence="1">
    <location>
        <position position="453"/>
    </location>
    <ligand>
        <name>(6S)-5-formyl-5,6,7,8-tetrahydrofolate</name>
        <dbReference type="ChEBI" id="CHEBI:57457"/>
    </ligand>
</feature>
<proteinExistence type="inferred from homology"/>
<evidence type="ECO:0000255" key="1">
    <source>
        <dbReference type="HAMAP-Rule" id="MF_00379"/>
    </source>
</evidence>
<evidence type="ECO:0000305" key="2"/>
<accession>Q9KVY5</accession>